<sequence length="216" mass="23467">MQKGILGKKLGMTQIFAPDGKIIPVTVVEAGPCVVVQKKTTATDGYNAVQLGFGEIRETLVNKPLKGHFEKHQVKATRYLREFRLDDVESLNVGDVIKADIFAEGELVDVTGISRGKGFAGGVKRWNFNRGPSSHGSKYHRRPGSLGQRRWARVPKGRKLPGRLGGERVTVLGLRVVKVDPEKNLILIKGAVPGAKGSLITIRDSVKAARAKAKAQ</sequence>
<name>RL3_SYMTH</name>
<gene>
    <name evidence="1" type="primary">rplC</name>
    <name type="ordered locus">STH3075</name>
</gene>
<comment type="function">
    <text evidence="1">One of the primary rRNA binding proteins, it binds directly near the 3'-end of the 23S rRNA, where it nucleates assembly of the 50S subunit.</text>
</comment>
<comment type="subunit">
    <text evidence="1">Part of the 50S ribosomal subunit. Forms a cluster with proteins L14 and L19.</text>
</comment>
<comment type="similarity">
    <text evidence="1">Belongs to the universal ribosomal protein uL3 family.</text>
</comment>
<keyword id="KW-1185">Reference proteome</keyword>
<keyword id="KW-0687">Ribonucleoprotein</keyword>
<keyword id="KW-0689">Ribosomal protein</keyword>
<keyword id="KW-0694">RNA-binding</keyword>
<keyword id="KW-0699">rRNA-binding</keyword>
<feature type="chain" id="PRO_0000241420" description="Large ribosomal subunit protein uL3">
    <location>
        <begin position="1"/>
        <end position="216"/>
    </location>
</feature>
<organism>
    <name type="scientific">Symbiobacterium thermophilum (strain DSM 24528 / JCM 14929 / IAM 14863 / T)</name>
    <dbReference type="NCBI Taxonomy" id="292459"/>
    <lineage>
        <taxon>Bacteria</taxon>
        <taxon>Bacillati</taxon>
        <taxon>Bacillota</taxon>
        <taxon>Clostridia</taxon>
        <taxon>Eubacteriales</taxon>
        <taxon>Symbiobacteriaceae</taxon>
        <taxon>Symbiobacterium</taxon>
    </lineage>
</organism>
<protein>
    <recommendedName>
        <fullName evidence="1">Large ribosomal subunit protein uL3</fullName>
    </recommendedName>
    <alternativeName>
        <fullName evidence="2">50S ribosomal protein L3</fullName>
    </alternativeName>
</protein>
<dbReference type="EMBL" id="AP006840">
    <property type="protein sequence ID" value="BAD42057.1"/>
    <property type="molecule type" value="Genomic_DNA"/>
</dbReference>
<dbReference type="RefSeq" id="WP_011197190.1">
    <property type="nucleotide sequence ID" value="NC_006177.1"/>
</dbReference>
<dbReference type="SMR" id="Q67JU3"/>
<dbReference type="STRING" id="292459.STH3075"/>
<dbReference type="KEGG" id="sth:STH3075"/>
<dbReference type="eggNOG" id="COG0087">
    <property type="taxonomic scope" value="Bacteria"/>
</dbReference>
<dbReference type="HOGENOM" id="CLU_044142_4_1_9"/>
<dbReference type="OrthoDB" id="9806135at2"/>
<dbReference type="Proteomes" id="UP000000417">
    <property type="component" value="Chromosome"/>
</dbReference>
<dbReference type="GO" id="GO:0022625">
    <property type="term" value="C:cytosolic large ribosomal subunit"/>
    <property type="evidence" value="ECO:0007669"/>
    <property type="project" value="TreeGrafter"/>
</dbReference>
<dbReference type="GO" id="GO:0019843">
    <property type="term" value="F:rRNA binding"/>
    <property type="evidence" value="ECO:0007669"/>
    <property type="project" value="UniProtKB-UniRule"/>
</dbReference>
<dbReference type="GO" id="GO:0003735">
    <property type="term" value="F:structural constituent of ribosome"/>
    <property type="evidence" value="ECO:0007669"/>
    <property type="project" value="InterPro"/>
</dbReference>
<dbReference type="GO" id="GO:0006412">
    <property type="term" value="P:translation"/>
    <property type="evidence" value="ECO:0007669"/>
    <property type="project" value="UniProtKB-UniRule"/>
</dbReference>
<dbReference type="FunFam" id="2.40.30.10:FF:000004">
    <property type="entry name" value="50S ribosomal protein L3"/>
    <property type="match status" value="1"/>
</dbReference>
<dbReference type="FunFam" id="3.30.160.810:FF:000001">
    <property type="entry name" value="50S ribosomal protein L3"/>
    <property type="match status" value="1"/>
</dbReference>
<dbReference type="Gene3D" id="3.30.160.810">
    <property type="match status" value="1"/>
</dbReference>
<dbReference type="Gene3D" id="2.40.30.10">
    <property type="entry name" value="Translation factors"/>
    <property type="match status" value="1"/>
</dbReference>
<dbReference type="HAMAP" id="MF_01325_B">
    <property type="entry name" value="Ribosomal_uL3_B"/>
    <property type="match status" value="1"/>
</dbReference>
<dbReference type="InterPro" id="IPR000597">
    <property type="entry name" value="Ribosomal_uL3"/>
</dbReference>
<dbReference type="InterPro" id="IPR019927">
    <property type="entry name" value="Ribosomal_uL3_bac/org-type"/>
</dbReference>
<dbReference type="InterPro" id="IPR019926">
    <property type="entry name" value="Ribosomal_uL3_CS"/>
</dbReference>
<dbReference type="InterPro" id="IPR009000">
    <property type="entry name" value="Transl_B-barrel_sf"/>
</dbReference>
<dbReference type="NCBIfam" id="TIGR03625">
    <property type="entry name" value="L3_bact"/>
    <property type="match status" value="1"/>
</dbReference>
<dbReference type="PANTHER" id="PTHR11229">
    <property type="entry name" value="50S RIBOSOMAL PROTEIN L3"/>
    <property type="match status" value="1"/>
</dbReference>
<dbReference type="PANTHER" id="PTHR11229:SF16">
    <property type="entry name" value="LARGE RIBOSOMAL SUBUNIT PROTEIN UL3C"/>
    <property type="match status" value="1"/>
</dbReference>
<dbReference type="Pfam" id="PF00297">
    <property type="entry name" value="Ribosomal_L3"/>
    <property type="match status" value="1"/>
</dbReference>
<dbReference type="SUPFAM" id="SSF50447">
    <property type="entry name" value="Translation proteins"/>
    <property type="match status" value="1"/>
</dbReference>
<dbReference type="PROSITE" id="PS00474">
    <property type="entry name" value="RIBOSOMAL_L3"/>
    <property type="match status" value="1"/>
</dbReference>
<accession>Q67JU3</accession>
<evidence type="ECO:0000255" key="1">
    <source>
        <dbReference type="HAMAP-Rule" id="MF_01325"/>
    </source>
</evidence>
<evidence type="ECO:0000305" key="2"/>
<reference key="1">
    <citation type="journal article" date="2004" name="Nucleic Acids Res.">
        <title>Genome sequence of Symbiobacterium thermophilum, an uncultivable bacterium that depends on microbial commensalism.</title>
        <authorList>
            <person name="Ueda K."/>
            <person name="Yamashita A."/>
            <person name="Ishikawa J."/>
            <person name="Shimada M."/>
            <person name="Watsuji T."/>
            <person name="Morimura K."/>
            <person name="Ikeda H."/>
            <person name="Hattori M."/>
            <person name="Beppu T."/>
        </authorList>
    </citation>
    <scope>NUCLEOTIDE SEQUENCE [LARGE SCALE GENOMIC DNA]</scope>
    <source>
        <strain>DSM 24528 / JCM 14929 / IAM 14863 / T</strain>
    </source>
</reference>
<proteinExistence type="inferred from homology"/>